<sequence>MAAQVTTSTDKVLRQPILGSRRFSNMLWASVSAIGGIGFLLAGLSSYFHKNLLGVSDPSNIQFIPQGAALTFYGVAGTLLSAYLWFVFFLDVGGGYNEFNKETGKVTIFRNGFVGKNRIINFQYPLKDILSIRAEIKEGLNPRRVLYLRVKNRGDIPLNRVGEPIPLAELENQGAELARFLTIPLEGL</sequence>
<evidence type="ECO:0000255" key="1">
    <source>
        <dbReference type="HAMAP-Rule" id="MF_00437"/>
    </source>
</evidence>
<evidence type="ECO:0000305" key="2"/>
<comment type="function">
    <text evidence="1">Seems to be required for the assembly of the photosystem I complex.</text>
</comment>
<comment type="subcellular location">
    <subcellularLocation>
        <location evidence="1">Cellular thylakoid membrane</location>
        <topology evidence="1">Multi-pass membrane protein</topology>
    </subcellularLocation>
</comment>
<comment type="similarity">
    <text evidence="1">Belongs to the Ycf4 family.</text>
</comment>
<proteinExistence type="inferred from homology"/>
<accession>O68611</accession>
<accession>B1XJW7</accession>
<keyword id="KW-0472">Membrane</keyword>
<keyword id="KW-0602">Photosynthesis</keyword>
<keyword id="KW-1185">Reference proteome</keyword>
<keyword id="KW-0793">Thylakoid</keyword>
<keyword id="KW-0812">Transmembrane</keyword>
<keyword id="KW-1133">Transmembrane helix</keyword>
<dbReference type="EMBL" id="AF052290">
    <property type="protein sequence ID" value="AAC18970.1"/>
    <property type="molecule type" value="Genomic_DNA"/>
</dbReference>
<dbReference type="EMBL" id="CP000951">
    <property type="protein sequence ID" value="ACA99095.1"/>
    <property type="molecule type" value="Genomic_DNA"/>
</dbReference>
<dbReference type="RefSeq" id="WP_012306718.1">
    <property type="nucleotide sequence ID" value="NZ_JAHHPU010000001.1"/>
</dbReference>
<dbReference type="SMR" id="O68611"/>
<dbReference type="STRING" id="32049.SYNPCC7002_A1093"/>
<dbReference type="KEGG" id="syp:SYNPCC7002_A1093"/>
<dbReference type="eggNOG" id="ENOG502Z7YX">
    <property type="taxonomic scope" value="Bacteria"/>
</dbReference>
<dbReference type="HOGENOM" id="CLU_095465_0_0_3"/>
<dbReference type="Proteomes" id="UP000001688">
    <property type="component" value="Chromosome"/>
</dbReference>
<dbReference type="GO" id="GO:0009522">
    <property type="term" value="C:photosystem I"/>
    <property type="evidence" value="ECO:0007669"/>
    <property type="project" value="InterPro"/>
</dbReference>
<dbReference type="GO" id="GO:0031676">
    <property type="term" value="C:plasma membrane-derived thylakoid membrane"/>
    <property type="evidence" value="ECO:0007669"/>
    <property type="project" value="UniProtKB-SubCell"/>
</dbReference>
<dbReference type="GO" id="GO:0015979">
    <property type="term" value="P:photosynthesis"/>
    <property type="evidence" value="ECO:0007669"/>
    <property type="project" value="UniProtKB-UniRule"/>
</dbReference>
<dbReference type="HAMAP" id="MF_00437">
    <property type="entry name" value="Ycf4"/>
    <property type="match status" value="1"/>
</dbReference>
<dbReference type="InterPro" id="IPR003359">
    <property type="entry name" value="PSI_Ycf4_assembly"/>
</dbReference>
<dbReference type="NCBIfam" id="NF002712">
    <property type="entry name" value="PRK02542.1"/>
    <property type="match status" value="1"/>
</dbReference>
<dbReference type="Pfam" id="PF02392">
    <property type="entry name" value="Ycf4"/>
    <property type="match status" value="1"/>
</dbReference>
<name>YCF4_PICP2</name>
<protein>
    <recommendedName>
        <fullName evidence="1">Photosystem I assembly protein Ycf4</fullName>
    </recommendedName>
</protein>
<organism>
    <name type="scientific">Picosynechococcus sp. (strain ATCC 27264 / PCC 7002 / PR-6)</name>
    <name type="common">Agmenellum quadruplicatum</name>
    <dbReference type="NCBI Taxonomy" id="32049"/>
    <lineage>
        <taxon>Bacteria</taxon>
        <taxon>Bacillati</taxon>
        <taxon>Cyanobacteriota</taxon>
        <taxon>Cyanophyceae</taxon>
        <taxon>Oscillatoriophycideae</taxon>
        <taxon>Chroococcales</taxon>
        <taxon>Geminocystaceae</taxon>
        <taxon>Picosynechococcus</taxon>
    </lineage>
</organism>
<reference key="1">
    <citation type="submission" date="1998-03" db="EMBL/GenBank/DDBJ databases">
        <authorList>
            <person name="Inoue K."/>
            <person name="Shen G."/>
            <person name="Long W.P."/>
            <person name="Bryant D.A."/>
            <person name="Sodeinde O.A."/>
        </authorList>
    </citation>
    <scope>NUCLEOTIDE SEQUENCE [GENOMIC DNA]</scope>
</reference>
<reference key="2">
    <citation type="submission" date="2008-02" db="EMBL/GenBank/DDBJ databases">
        <title>Complete sequence of Synechococcus sp. PCC 7002.</title>
        <authorList>
            <person name="Li T."/>
            <person name="Zhao J."/>
            <person name="Zhao C."/>
            <person name="Liu Z."/>
            <person name="Zhao F."/>
            <person name="Marquardt J."/>
            <person name="Nomura C.T."/>
            <person name="Persson S."/>
            <person name="Detter J.C."/>
            <person name="Richardson P.M."/>
            <person name="Lanz C."/>
            <person name="Schuster S.C."/>
            <person name="Wang J."/>
            <person name="Li S."/>
            <person name="Huang X."/>
            <person name="Cai T."/>
            <person name="Yu Z."/>
            <person name="Luo J."/>
            <person name="Zhao J."/>
            <person name="Bryant D.A."/>
        </authorList>
    </citation>
    <scope>NUCLEOTIDE SEQUENCE [LARGE SCALE GENOMIC DNA]</scope>
    <source>
        <strain>ATCC 27264 / PCC 7002 / PR-6</strain>
    </source>
</reference>
<feature type="chain" id="PRO_0000217638" description="Photosystem I assembly protein Ycf4">
    <location>
        <begin position="1"/>
        <end position="188"/>
    </location>
</feature>
<feature type="transmembrane region" description="Helical" evidence="1">
    <location>
        <begin position="26"/>
        <end position="48"/>
    </location>
</feature>
<feature type="transmembrane region" description="Helical" evidence="1">
    <location>
        <begin position="68"/>
        <end position="90"/>
    </location>
</feature>
<feature type="sequence conflict" description="In Ref. 1; AAC18970." evidence="2" ref="1">
    <original>QP</original>
    <variation>HA</variation>
    <location>
        <begin position="15"/>
        <end position="16"/>
    </location>
</feature>
<gene>
    <name evidence="1" type="primary">ycf4</name>
    <name type="ordered locus">SYNPCC7002_A1093</name>
</gene>